<protein>
    <recommendedName>
        <fullName evidence="1">Large ribosomal subunit protein uL29</fullName>
    </recommendedName>
    <alternativeName>
        <fullName evidence="2">50S ribosomal protein L29</fullName>
    </alternativeName>
</protein>
<name>RL29_TROWT</name>
<dbReference type="EMBL" id="AE014184">
    <property type="protein sequence ID" value="AAO44643.1"/>
    <property type="status" value="ALT_INIT"/>
    <property type="molecule type" value="Genomic_DNA"/>
</dbReference>
<dbReference type="SMR" id="Q83FZ4"/>
<dbReference type="STRING" id="203267.TWT_546"/>
<dbReference type="KEGG" id="twh:TWT_546"/>
<dbReference type="eggNOG" id="COG0255">
    <property type="taxonomic scope" value="Bacteria"/>
</dbReference>
<dbReference type="HOGENOM" id="CLU_158491_3_3_11"/>
<dbReference type="Proteomes" id="UP000002200">
    <property type="component" value="Chromosome"/>
</dbReference>
<dbReference type="GO" id="GO:0022625">
    <property type="term" value="C:cytosolic large ribosomal subunit"/>
    <property type="evidence" value="ECO:0007669"/>
    <property type="project" value="TreeGrafter"/>
</dbReference>
<dbReference type="GO" id="GO:0003735">
    <property type="term" value="F:structural constituent of ribosome"/>
    <property type="evidence" value="ECO:0007669"/>
    <property type="project" value="InterPro"/>
</dbReference>
<dbReference type="GO" id="GO:0006412">
    <property type="term" value="P:translation"/>
    <property type="evidence" value="ECO:0007669"/>
    <property type="project" value="UniProtKB-UniRule"/>
</dbReference>
<dbReference type="CDD" id="cd00427">
    <property type="entry name" value="Ribosomal_L29_HIP"/>
    <property type="match status" value="1"/>
</dbReference>
<dbReference type="FunFam" id="1.10.287.310:FF:000001">
    <property type="entry name" value="50S ribosomal protein L29"/>
    <property type="match status" value="1"/>
</dbReference>
<dbReference type="Gene3D" id="1.10.287.310">
    <property type="match status" value="1"/>
</dbReference>
<dbReference type="HAMAP" id="MF_00374">
    <property type="entry name" value="Ribosomal_uL29"/>
    <property type="match status" value="1"/>
</dbReference>
<dbReference type="InterPro" id="IPR050063">
    <property type="entry name" value="Ribosomal_protein_uL29"/>
</dbReference>
<dbReference type="InterPro" id="IPR001854">
    <property type="entry name" value="Ribosomal_uL29"/>
</dbReference>
<dbReference type="InterPro" id="IPR036049">
    <property type="entry name" value="Ribosomal_uL29_sf"/>
</dbReference>
<dbReference type="NCBIfam" id="TIGR00012">
    <property type="entry name" value="L29"/>
    <property type="match status" value="1"/>
</dbReference>
<dbReference type="PANTHER" id="PTHR10916">
    <property type="entry name" value="60S RIBOSOMAL PROTEIN L35/50S RIBOSOMAL PROTEIN L29"/>
    <property type="match status" value="1"/>
</dbReference>
<dbReference type="PANTHER" id="PTHR10916:SF0">
    <property type="entry name" value="LARGE RIBOSOMAL SUBUNIT PROTEIN UL29C"/>
    <property type="match status" value="1"/>
</dbReference>
<dbReference type="Pfam" id="PF00831">
    <property type="entry name" value="Ribosomal_L29"/>
    <property type="match status" value="1"/>
</dbReference>
<dbReference type="SUPFAM" id="SSF46561">
    <property type="entry name" value="Ribosomal protein L29 (L29p)"/>
    <property type="match status" value="1"/>
</dbReference>
<feature type="chain" id="PRO_0000130489" description="Large ribosomal subunit protein uL29">
    <location>
        <begin position="1"/>
        <end position="79"/>
    </location>
</feature>
<keyword id="KW-1185">Reference proteome</keyword>
<keyword id="KW-0687">Ribonucleoprotein</keyword>
<keyword id="KW-0689">Ribosomal protein</keyword>
<reference key="1">
    <citation type="journal article" date="2003" name="Genome Res.">
        <title>Tropheryma whipplei twist: a human pathogenic Actinobacteria with a reduced genome.</title>
        <authorList>
            <person name="Raoult D."/>
            <person name="Ogata H."/>
            <person name="Audic S."/>
            <person name="Robert C."/>
            <person name="Suhre K."/>
            <person name="Drancourt M."/>
            <person name="Claverie J.-M."/>
        </authorList>
    </citation>
    <scope>NUCLEOTIDE SEQUENCE [LARGE SCALE GENOMIC DNA]</scope>
    <source>
        <strain>Twist</strain>
    </source>
</reference>
<gene>
    <name evidence="1" type="primary">rpmC</name>
    <name type="ordered locus">TWT_546</name>
</gene>
<organism>
    <name type="scientific">Tropheryma whipplei (strain Twist)</name>
    <name type="common">Whipple's bacillus</name>
    <dbReference type="NCBI Taxonomy" id="203267"/>
    <lineage>
        <taxon>Bacteria</taxon>
        <taxon>Bacillati</taxon>
        <taxon>Actinomycetota</taxon>
        <taxon>Actinomycetes</taxon>
        <taxon>Micrococcales</taxon>
        <taxon>Tropherymataceae</taxon>
        <taxon>Tropheryma</taxon>
    </lineage>
</organism>
<sequence>MLGSKGLSPTDLRGMTDDHLRVELKNAKEEVFKLRFQSATGQLAHNARLRAVRRDIARIYTVMRERDIGIRSVQEEVSQ</sequence>
<comment type="similarity">
    <text evidence="1">Belongs to the universal ribosomal protein uL29 family.</text>
</comment>
<comment type="sequence caution" evidence="2">
    <conflict type="erroneous initiation">
        <sequence resource="EMBL-CDS" id="AAO44643"/>
    </conflict>
</comment>
<proteinExistence type="inferred from homology"/>
<evidence type="ECO:0000255" key="1">
    <source>
        <dbReference type="HAMAP-Rule" id="MF_00374"/>
    </source>
</evidence>
<evidence type="ECO:0000305" key="2"/>
<accession>Q83FZ4</accession>